<keyword id="KW-0227">DNA damage</keyword>
<keyword id="KW-0233">DNA recombination</keyword>
<keyword id="KW-0234">DNA repair</keyword>
<keyword id="KW-0255">Endonuclease</keyword>
<keyword id="KW-0378">Hydrolase</keyword>
<keyword id="KW-0479">Metal-binding</keyword>
<keyword id="KW-0540">Nuclease</keyword>
<keyword id="KW-0539">Nucleus</keyword>
<keyword id="KW-1185">Reference proteome</keyword>
<keyword id="KW-0862">Zinc</keyword>
<keyword id="KW-0863">Zinc-finger</keyword>
<reference key="1">
    <citation type="journal article" date="2005" name="Science">
        <title>The genome sequence of Trypanosoma cruzi, etiologic agent of Chagas disease.</title>
        <authorList>
            <person name="El-Sayed N.M.A."/>
            <person name="Myler P.J."/>
            <person name="Bartholomeu D.C."/>
            <person name="Nilsson D."/>
            <person name="Aggarwal G."/>
            <person name="Tran A.-N."/>
            <person name="Ghedin E."/>
            <person name="Worthey E.A."/>
            <person name="Delcher A.L."/>
            <person name="Blandin G."/>
            <person name="Westenberger S.J."/>
            <person name="Caler E."/>
            <person name="Cerqueira G.C."/>
            <person name="Branche C."/>
            <person name="Haas B."/>
            <person name="Anupama A."/>
            <person name="Arner E."/>
            <person name="Aslund L."/>
            <person name="Attipoe P."/>
            <person name="Bontempi E."/>
            <person name="Bringaud F."/>
            <person name="Burton P."/>
            <person name="Cadag E."/>
            <person name="Campbell D.A."/>
            <person name="Carrington M."/>
            <person name="Crabtree J."/>
            <person name="Darban H."/>
            <person name="da Silveira J.F."/>
            <person name="de Jong P."/>
            <person name="Edwards K."/>
            <person name="Englund P.T."/>
            <person name="Fazelina G."/>
            <person name="Feldblyum T."/>
            <person name="Ferella M."/>
            <person name="Frasch A.C."/>
            <person name="Gull K."/>
            <person name="Horn D."/>
            <person name="Hou L."/>
            <person name="Huang Y."/>
            <person name="Kindlund E."/>
            <person name="Klingbeil M."/>
            <person name="Kluge S."/>
            <person name="Koo H."/>
            <person name="Lacerda D."/>
            <person name="Levin M.J."/>
            <person name="Lorenzi H."/>
            <person name="Louie T."/>
            <person name="Machado C.R."/>
            <person name="McCulloch R."/>
            <person name="McKenna A."/>
            <person name="Mizuno Y."/>
            <person name="Mottram J.C."/>
            <person name="Nelson S."/>
            <person name="Ochaya S."/>
            <person name="Osoegawa K."/>
            <person name="Pai G."/>
            <person name="Parsons M."/>
            <person name="Pentony M."/>
            <person name="Pettersson U."/>
            <person name="Pop M."/>
            <person name="Ramirez J.L."/>
            <person name="Rinta J."/>
            <person name="Robertson L."/>
            <person name="Salzberg S.L."/>
            <person name="Sanchez D.O."/>
            <person name="Seyler A."/>
            <person name="Sharma R."/>
            <person name="Shetty J."/>
            <person name="Simpson A.J."/>
            <person name="Sisk E."/>
            <person name="Tammi M.T."/>
            <person name="Tarleton R."/>
            <person name="Teixeira S."/>
            <person name="Van Aken S."/>
            <person name="Vogt C."/>
            <person name="Ward P.N."/>
            <person name="Wickstead B."/>
            <person name="Wortman J."/>
            <person name="White O."/>
            <person name="Fraser C.M."/>
            <person name="Stuart K.D."/>
            <person name="Andersson B."/>
        </authorList>
    </citation>
    <scope>NUCLEOTIDE SEQUENCE [LARGE SCALE GENOMIC DNA]</scope>
    <source>
        <strain>CL Brener</strain>
    </source>
</reference>
<gene>
    <name type="ORF">Tc00.1047053511881.30</name>
</gene>
<comment type="function">
    <text evidence="1">Catalytic subunit of a heterodimeric structure-specific endonuclease that resolves DNA secondary structures generated during DNA repair and recombination. Has endonuclease activity towards branched DNA substrates, introducing single-strand cuts in duplex DNA close to junctions with ss-DNA.</text>
</comment>
<comment type="cofactor">
    <cofactor evidence="1">
        <name>a divalent metal cation</name>
        <dbReference type="ChEBI" id="CHEBI:60240"/>
    </cofactor>
</comment>
<comment type="subunit">
    <text evidence="1">Forms a heterodimer with a member of the SLX4 family.</text>
</comment>
<comment type="subcellular location">
    <subcellularLocation>
        <location evidence="1">Nucleus</location>
    </subcellularLocation>
</comment>
<comment type="similarity">
    <text evidence="1">Belongs to the SLX1 family.</text>
</comment>
<proteinExistence type="inferred from homology"/>
<feature type="chain" id="PRO_0000383769" description="Structure-specific endonuclease subunit SLX1 homolog 2">
    <location>
        <begin position="1"/>
        <end position="530"/>
    </location>
</feature>
<feature type="domain" description="GIY-YIG" evidence="1">
    <location>
        <begin position="4"/>
        <end position="89"/>
    </location>
</feature>
<feature type="zinc finger region" description="SLX1-type" evidence="1">
    <location>
        <begin position="232"/>
        <end position="365"/>
    </location>
</feature>
<feature type="region of interest" description="Disordered" evidence="2">
    <location>
        <begin position="276"/>
        <end position="306"/>
    </location>
</feature>
<feature type="region of interest" description="Disordered" evidence="2">
    <location>
        <begin position="410"/>
        <end position="438"/>
    </location>
</feature>
<feature type="region of interest" description="Disordered" evidence="2">
    <location>
        <begin position="474"/>
        <end position="502"/>
    </location>
</feature>
<feature type="compositionally biased region" description="Basic and acidic residues" evidence="2">
    <location>
        <begin position="283"/>
        <end position="298"/>
    </location>
</feature>
<dbReference type="EC" id="3.1.-.-" evidence="1"/>
<dbReference type="EMBL" id="AAHK01001928">
    <property type="protein sequence ID" value="EAN83738.1"/>
    <property type="molecule type" value="Genomic_DNA"/>
</dbReference>
<dbReference type="RefSeq" id="XP_805589.1">
    <property type="nucleotide sequence ID" value="XM_800496.1"/>
</dbReference>
<dbReference type="SMR" id="Q4CTY5"/>
<dbReference type="STRING" id="353153.Q4CTY5"/>
<dbReference type="PaxDb" id="353153-Q4CTY5"/>
<dbReference type="EnsemblProtists" id="EAN83738">
    <property type="protein sequence ID" value="EAN83738"/>
    <property type="gene ID" value="Tc00.1047053511881.30"/>
</dbReference>
<dbReference type="GeneID" id="3535356"/>
<dbReference type="KEGG" id="tcr:511881.30"/>
<dbReference type="eggNOG" id="KOG3005">
    <property type="taxonomic scope" value="Eukaryota"/>
</dbReference>
<dbReference type="InParanoid" id="Q4CTY5"/>
<dbReference type="Proteomes" id="UP000002296">
    <property type="component" value="Unassembled WGS sequence"/>
</dbReference>
<dbReference type="GO" id="GO:0033557">
    <property type="term" value="C:Slx1-Slx4 complex"/>
    <property type="evidence" value="ECO:0007669"/>
    <property type="project" value="UniProtKB-UniRule"/>
</dbReference>
<dbReference type="GO" id="GO:0017108">
    <property type="term" value="F:5'-flap endonuclease activity"/>
    <property type="evidence" value="ECO:0007669"/>
    <property type="project" value="InterPro"/>
</dbReference>
<dbReference type="GO" id="GO:0008270">
    <property type="term" value="F:zinc ion binding"/>
    <property type="evidence" value="ECO:0007669"/>
    <property type="project" value="UniProtKB-KW"/>
</dbReference>
<dbReference type="GO" id="GO:0006310">
    <property type="term" value="P:DNA recombination"/>
    <property type="evidence" value="ECO:0007669"/>
    <property type="project" value="UniProtKB-UniRule"/>
</dbReference>
<dbReference type="GO" id="GO:0006281">
    <property type="term" value="P:DNA repair"/>
    <property type="evidence" value="ECO:0007669"/>
    <property type="project" value="UniProtKB-UniRule"/>
</dbReference>
<dbReference type="CDD" id="cd10455">
    <property type="entry name" value="GIY-YIG_SLX1"/>
    <property type="match status" value="1"/>
</dbReference>
<dbReference type="Gene3D" id="3.40.1440.10">
    <property type="entry name" value="GIY-YIG endonuclease"/>
    <property type="match status" value="1"/>
</dbReference>
<dbReference type="HAMAP" id="MF_03100">
    <property type="entry name" value="Endonuc_su_Slx1"/>
    <property type="match status" value="1"/>
</dbReference>
<dbReference type="InterPro" id="IPR000305">
    <property type="entry name" value="GIY-YIG_endonuc"/>
</dbReference>
<dbReference type="InterPro" id="IPR035901">
    <property type="entry name" value="GIY-YIG_endonuc_sf"/>
</dbReference>
<dbReference type="InterPro" id="IPR027520">
    <property type="entry name" value="Slx1"/>
</dbReference>
<dbReference type="InterPro" id="IPR050381">
    <property type="entry name" value="SLX1_endonuclease"/>
</dbReference>
<dbReference type="PANTHER" id="PTHR20208">
    <property type="entry name" value="STRUCTURE-SPECIFIC ENDONUCLEASE SUBUNIT SLX1"/>
    <property type="match status" value="1"/>
</dbReference>
<dbReference type="PANTHER" id="PTHR20208:SF13">
    <property type="entry name" value="STRUCTURE-SPECIFIC ENDONUCLEASE SUBUNIT SLX1"/>
    <property type="match status" value="1"/>
</dbReference>
<dbReference type="Pfam" id="PF01541">
    <property type="entry name" value="GIY-YIG"/>
    <property type="match status" value="1"/>
</dbReference>
<dbReference type="PROSITE" id="PS50164">
    <property type="entry name" value="GIY_YIG"/>
    <property type="match status" value="1"/>
</dbReference>
<evidence type="ECO:0000255" key="1">
    <source>
        <dbReference type="HAMAP-Rule" id="MF_03100"/>
    </source>
</evidence>
<evidence type="ECO:0000256" key="2">
    <source>
        <dbReference type="SAM" id="MobiDB-lite"/>
    </source>
</evidence>
<organism>
    <name type="scientific">Trypanosoma cruzi (strain CL Brener)</name>
    <dbReference type="NCBI Taxonomy" id="353153"/>
    <lineage>
        <taxon>Eukaryota</taxon>
        <taxon>Discoba</taxon>
        <taxon>Euglenozoa</taxon>
        <taxon>Kinetoplastea</taxon>
        <taxon>Metakinetoplastina</taxon>
        <taxon>Trypanosomatida</taxon>
        <taxon>Trypanosomatidae</taxon>
        <taxon>Trypanosoma</taxon>
        <taxon>Schizotrypanum</taxon>
    </lineage>
</organism>
<sequence length="530" mass="59703">MDTRFHCVYLLTSLDPQCAGEYYIGYTVDPIRRLRQHNGEIVSGAWRTKRRGRPWELLCCVSGFGEDRIALKFEWCWQHPTKSTRLKTQMTQLRGVHRLPYAVGVLHLLLRADLFARLQLTLHIFEPEHVGRVVAELQGRVPSIPPLVATSLLRIEEITKERFMSLYLDGVSGGDGTAGDGCVYFVTAPLSSQPEADAPSRRVRSCRYLSEEDIFRQHARVKELLEANQCPCALCSLPLRSPYFVRCSRTPFCTLRAHLACLAMWFTYETMQKRDATMGQSTRNERSGEYSNKIKDDSNDGTMDAHASGRQLHSLSVNNADFSSSRDAGSILDSSGHISAFEESRCASSPSLTLLPSQPCPCPLCDEPLQWGALVHDLKRRAVLEKRWMERQRREKIEAALAERLQRLQNSSLTERKSRRKAKPALGQKRNRGEYCGDTVGDGGKEAITNWRARVMDGCDSWNDTNDFSHSVSLPPSGDEGYACDSSRRGVGGSKHTTRMTDEGKNDSITDICDCVLQLTEFNLDEWLDA</sequence>
<protein>
    <recommendedName>
        <fullName evidence="1">Structure-specific endonuclease subunit SLX1 homolog 2</fullName>
        <ecNumber evidence="1">3.1.-.-</ecNumber>
    </recommendedName>
</protein>
<name>SLX12_TRYCC</name>
<accession>Q4CTY5</accession>